<keyword id="KW-0963">Cytoplasm</keyword>
<keyword id="KW-0251">Elongation factor</keyword>
<keyword id="KW-0648">Protein biosynthesis</keyword>
<keyword id="KW-1185">Reference proteome</keyword>
<proteinExistence type="inferred from homology"/>
<evidence type="ECO:0000250" key="1"/>
<evidence type="ECO:0000305" key="2"/>
<reference key="1">
    <citation type="journal article" date="2000" name="Nature">
        <title>DNA sequence of both chromosomes of the cholera pathogen Vibrio cholerae.</title>
        <authorList>
            <person name="Heidelberg J.F."/>
            <person name="Eisen J.A."/>
            <person name="Nelson W.C."/>
            <person name="Clayton R.A."/>
            <person name="Gwinn M.L."/>
            <person name="Dodson R.J."/>
            <person name="Haft D.H."/>
            <person name="Hickey E.K."/>
            <person name="Peterson J.D."/>
            <person name="Umayam L.A."/>
            <person name="Gill S.R."/>
            <person name="Nelson K.E."/>
            <person name="Read T.D."/>
            <person name="Tettelin H."/>
            <person name="Richardson D.L."/>
            <person name="Ermolaeva M.D."/>
            <person name="Vamathevan J.J."/>
            <person name="Bass S."/>
            <person name="Qin H."/>
            <person name="Dragoi I."/>
            <person name="Sellers P."/>
            <person name="McDonald L.A."/>
            <person name="Utterback T.R."/>
            <person name="Fleischmann R.D."/>
            <person name="Nierman W.C."/>
            <person name="White O."/>
            <person name="Salzberg S.L."/>
            <person name="Smith H.O."/>
            <person name="Colwell R.R."/>
            <person name="Mekalanos J.J."/>
            <person name="Venter J.C."/>
            <person name="Fraser C.M."/>
        </authorList>
    </citation>
    <scope>NUCLEOTIDE SEQUENCE [LARGE SCALE GENOMIC DNA]</scope>
    <source>
        <strain>ATCC 39315 / El Tor Inaba N16961</strain>
    </source>
</reference>
<gene>
    <name type="primary">tsf</name>
    <name type="ordered locus">VC_2259</name>
</gene>
<comment type="function">
    <text evidence="1">Associates with the EF-Tu.GDP complex and induces the exchange of GDP to GTP. It remains bound to the aminoacyl-tRNA.EF-Tu.GTP complex up to the GTP hydrolysis stage on the ribosome (By similarity).</text>
</comment>
<comment type="subcellular location">
    <subcellularLocation>
        <location evidence="1">Cytoplasm</location>
    </subcellularLocation>
</comment>
<comment type="similarity">
    <text evidence="2">Belongs to the EF-Ts family.</text>
</comment>
<feature type="chain" id="PRO_0000161229" description="Elongation factor Ts">
    <location>
        <begin position="1"/>
        <end position="280"/>
    </location>
</feature>
<feature type="region of interest" description="Involved in Mg(2+) ion dislocation from EF-Tu" evidence="1">
    <location>
        <begin position="79"/>
        <end position="82"/>
    </location>
</feature>
<protein>
    <recommendedName>
        <fullName>Elongation factor Ts</fullName>
        <shortName>EF-Ts</shortName>
    </recommendedName>
</protein>
<organism>
    <name type="scientific">Vibrio cholerae serotype O1 (strain ATCC 39315 / El Tor Inaba N16961)</name>
    <dbReference type="NCBI Taxonomy" id="243277"/>
    <lineage>
        <taxon>Bacteria</taxon>
        <taxon>Pseudomonadati</taxon>
        <taxon>Pseudomonadota</taxon>
        <taxon>Gammaproteobacteria</taxon>
        <taxon>Vibrionales</taxon>
        <taxon>Vibrionaceae</taxon>
        <taxon>Vibrio</taxon>
    </lineage>
</organism>
<name>EFTS_VIBCH</name>
<sequence>MAVTAALVKELRERTGAGMMECKKALVETNGDIELAIENMRKSGAAKAAKKAGNIAAEGTIMIKEGEGIAALVEVNCQTDFVAKDSNFVAFANQVTDAALASKASVEELQAQFEEARVALVAKIGENINIRRVQYVEGEALATYRHGDRIGVVVAGSADVETLKHVAMHVAASRPEFLTPDDVPAEVVAKEREVQVGIAMNEGKSKEIAEKMVEGRMKKFTGEVSLTGQPFVMEPKKTVGEILAEKGATVSAFIRLEVGEGIEKQEGLSFAEEVALAQKG</sequence>
<dbReference type="EMBL" id="AE003852">
    <property type="protein sequence ID" value="AAF95403.1"/>
    <property type="molecule type" value="Genomic_DNA"/>
</dbReference>
<dbReference type="PIR" id="A82100">
    <property type="entry name" value="A82100"/>
</dbReference>
<dbReference type="RefSeq" id="NP_231890.1">
    <property type="nucleotide sequence ID" value="NC_002505.1"/>
</dbReference>
<dbReference type="RefSeq" id="WP_000301490.1">
    <property type="nucleotide sequence ID" value="NZ_LT906614.1"/>
</dbReference>
<dbReference type="SMR" id="Q9KPV3"/>
<dbReference type="STRING" id="243277.VC_2259"/>
<dbReference type="DNASU" id="2613181"/>
<dbReference type="EnsemblBacteria" id="AAF95403">
    <property type="protein sequence ID" value="AAF95403"/>
    <property type="gene ID" value="VC_2259"/>
</dbReference>
<dbReference type="GeneID" id="69719116"/>
<dbReference type="KEGG" id="vch:VC_2259"/>
<dbReference type="PATRIC" id="fig|243277.26.peg.2155"/>
<dbReference type="eggNOG" id="COG0264">
    <property type="taxonomic scope" value="Bacteria"/>
</dbReference>
<dbReference type="HOGENOM" id="CLU_047155_0_2_6"/>
<dbReference type="Proteomes" id="UP000000584">
    <property type="component" value="Chromosome 1"/>
</dbReference>
<dbReference type="GO" id="GO:0005737">
    <property type="term" value="C:cytoplasm"/>
    <property type="evidence" value="ECO:0007669"/>
    <property type="project" value="UniProtKB-SubCell"/>
</dbReference>
<dbReference type="GO" id="GO:0003746">
    <property type="term" value="F:translation elongation factor activity"/>
    <property type="evidence" value="ECO:0000318"/>
    <property type="project" value="GO_Central"/>
</dbReference>
<dbReference type="GO" id="GO:0006414">
    <property type="term" value="P:translational elongation"/>
    <property type="evidence" value="ECO:0000318"/>
    <property type="project" value="GO_Central"/>
</dbReference>
<dbReference type="CDD" id="cd14275">
    <property type="entry name" value="UBA_EF-Ts"/>
    <property type="match status" value="1"/>
</dbReference>
<dbReference type="FunFam" id="1.10.286.20:FF:000001">
    <property type="entry name" value="Elongation factor Ts"/>
    <property type="match status" value="1"/>
</dbReference>
<dbReference type="FunFam" id="1.10.8.10:FF:000001">
    <property type="entry name" value="Elongation factor Ts"/>
    <property type="match status" value="1"/>
</dbReference>
<dbReference type="FunFam" id="3.30.479.20:FF:000001">
    <property type="entry name" value="Elongation factor Ts"/>
    <property type="match status" value="1"/>
</dbReference>
<dbReference type="Gene3D" id="1.10.286.20">
    <property type="match status" value="1"/>
</dbReference>
<dbReference type="Gene3D" id="1.10.8.10">
    <property type="entry name" value="DNA helicase RuvA subunit, C-terminal domain"/>
    <property type="match status" value="1"/>
</dbReference>
<dbReference type="Gene3D" id="3.30.479.20">
    <property type="entry name" value="Elongation factor Ts, dimerisation domain"/>
    <property type="match status" value="2"/>
</dbReference>
<dbReference type="HAMAP" id="MF_00050">
    <property type="entry name" value="EF_Ts"/>
    <property type="match status" value="1"/>
</dbReference>
<dbReference type="InterPro" id="IPR036402">
    <property type="entry name" value="EF-Ts_dimer_sf"/>
</dbReference>
<dbReference type="InterPro" id="IPR001816">
    <property type="entry name" value="Transl_elong_EFTs/EF1B"/>
</dbReference>
<dbReference type="InterPro" id="IPR014039">
    <property type="entry name" value="Transl_elong_EFTs/EF1B_dimer"/>
</dbReference>
<dbReference type="InterPro" id="IPR018101">
    <property type="entry name" value="Transl_elong_Ts_CS"/>
</dbReference>
<dbReference type="InterPro" id="IPR009060">
    <property type="entry name" value="UBA-like_sf"/>
</dbReference>
<dbReference type="NCBIfam" id="TIGR00116">
    <property type="entry name" value="tsf"/>
    <property type="match status" value="1"/>
</dbReference>
<dbReference type="PANTHER" id="PTHR11741">
    <property type="entry name" value="ELONGATION FACTOR TS"/>
    <property type="match status" value="1"/>
</dbReference>
<dbReference type="PANTHER" id="PTHR11741:SF0">
    <property type="entry name" value="ELONGATION FACTOR TS, MITOCHONDRIAL"/>
    <property type="match status" value="1"/>
</dbReference>
<dbReference type="Pfam" id="PF00889">
    <property type="entry name" value="EF_TS"/>
    <property type="match status" value="1"/>
</dbReference>
<dbReference type="SUPFAM" id="SSF54713">
    <property type="entry name" value="Elongation factor Ts (EF-Ts), dimerisation domain"/>
    <property type="match status" value="2"/>
</dbReference>
<dbReference type="SUPFAM" id="SSF46934">
    <property type="entry name" value="UBA-like"/>
    <property type="match status" value="1"/>
</dbReference>
<dbReference type="PROSITE" id="PS01126">
    <property type="entry name" value="EF_TS_1"/>
    <property type="match status" value="1"/>
</dbReference>
<dbReference type="PROSITE" id="PS01127">
    <property type="entry name" value="EF_TS_2"/>
    <property type="match status" value="1"/>
</dbReference>
<accession>Q9KPV3</accession>